<name>PURR_ECO55</name>
<comment type="function">
    <text evidence="1">Is the main repressor of the genes involved in the de novo synthesis of purine nucleotides, regulating purB, purC, purEK, purF, purHD, purL, purMN and guaBA expression. PurR is allosterically activated to bind its cognate DNA by binding the purine corepressors, hypoxanthine or guanine, thereby effecting transcription repression.</text>
</comment>
<comment type="pathway">
    <text>Purine metabolism; purine nucleotide biosynthesis [regulation].</text>
</comment>
<comment type="subunit">
    <text evidence="1">Homodimer.</text>
</comment>
<comment type="domain">
    <text evidence="1">Consists of two structural and functional domains: an N-terminal DNA-binding domain, approximately the first 60 residues, and a larger C-terminal domain, approximately 280 residues, which imparts the function of corepressor binding and oligomerization.</text>
</comment>
<protein>
    <recommendedName>
        <fullName evidence="1">HTH-type transcriptional repressor PurR</fullName>
    </recommendedName>
    <alternativeName>
        <fullName evidence="1">Pur regulon repressor</fullName>
    </alternativeName>
    <alternativeName>
        <fullName evidence="1">Purine nucleotide synthesis repressor</fullName>
    </alternativeName>
</protein>
<gene>
    <name evidence="1" type="primary">purR</name>
    <name type="ordered locus">EC55989_1826</name>
</gene>
<dbReference type="EMBL" id="CU928145">
    <property type="protein sequence ID" value="CAU97685.1"/>
    <property type="molecule type" value="Genomic_DNA"/>
</dbReference>
<dbReference type="RefSeq" id="WP_000190982.1">
    <property type="nucleotide sequence ID" value="NC_011748.1"/>
</dbReference>
<dbReference type="SMR" id="B7L5L1"/>
<dbReference type="GeneID" id="75204504"/>
<dbReference type="KEGG" id="eck:EC55989_1826"/>
<dbReference type="HOGENOM" id="CLU_037628_6_2_6"/>
<dbReference type="UniPathway" id="UPA00488"/>
<dbReference type="Proteomes" id="UP000000746">
    <property type="component" value="Chromosome"/>
</dbReference>
<dbReference type="GO" id="GO:0003700">
    <property type="term" value="F:DNA-binding transcription factor activity"/>
    <property type="evidence" value="ECO:0007669"/>
    <property type="project" value="TreeGrafter"/>
</dbReference>
<dbReference type="GO" id="GO:0000976">
    <property type="term" value="F:transcription cis-regulatory region binding"/>
    <property type="evidence" value="ECO:0007669"/>
    <property type="project" value="TreeGrafter"/>
</dbReference>
<dbReference type="GO" id="GO:0045892">
    <property type="term" value="P:negative regulation of DNA-templated transcription"/>
    <property type="evidence" value="ECO:0007669"/>
    <property type="project" value="UniProtKB-UniRule"/>
</dbReference>
<dbReference type="GO" id="GO:0006164">
    <property type="term" value="P:purine nucleotide biosynthetic process"/>
    <property type="evidence" value="ECO:0007669"/>
    <property type="project" value="UniProtKB-UniPathway"/>
</dbReference>
<dbReference type="CDD" id="cd01392">
    <property type="entry name" value="HTH_LacI"/>
    <property type="match status" value="1"/>
</dbReference>
<dbReference type="CDD" id="cd06275">
    <property type="entry name" value="PBP1_PurR"/>
    <property type="match status" value="1"/>
</dbReference>
<dbReference type="FunFam" id="1.10.260.40:FF:000002">
    <property type="entry name" value="HTH-type transcriptional repressor PurR"/>
    <property type="match status" value="1"/>
</dbReference>
<dbReference type="FunFam" id="3.40.50.2300:FF:000045">
    <property type="entry name" value="HTH-type transcriptional repressor PurR"/>
    <property type="match status" value="1"/>
</dbReference>
<dbReference type="Gene3D" id="3.40.50.2300">
    <property type="match status" value="2"/>
</dbReference>
<dbReference type="Gene3D" id="1.10.260.40">
    <property type="entry name" value="lambda repressor-like DNA-binding domains"/>
    <property type="match status" value="1"/>
</dbReference>
<dbReference type="HAMAP" id="MF_01277">
    <property type="entry name" value="HTH_type_PurR"/>
    <property type="match status" value="1"/>
</dbReference>
<dbReference type="InterPro" id="IPR000843">
    <property type="entry name" value="HTH_LacI"/>
</dbReference>
<dbReference type="InterPro" id="IPR046335">
    <property type="entry name" value="LacI/GalR-like_sensor"/>
</dbReference>
<dbReference type="InterPro" id="IPR010982">
    <property type="entry name" value="Lambda_DNA-bd_dom_sf"/>
</dbReference>
<dbReference type="InterPro" id="IPR028082">
    <property type="entry name" value="Peripla_BP_I"/>
</dbReference>
<dbReference type="InterPro" id="IPR023588">
    <property type="entry name" value="Tscrpt_reg_HTH_PurR"/>
</dbReference>
<dbReference type="NCBIfam" id="NF007979">
    <property type="entry name" value="PRK10703.1"/>
    <property type="match status" value="1"/>
</dbReference>
<dbReference type="PANTHER" id="PTHR30146:SF148">
    <property type="entry name" value="HTH-TYPE TRANSCRIPTIONAL REPRESSOR PURR-RELATED"/>
    <property type="match status" value="1"/>
</dbReference>
<dbReference type="PANTHER" id="PTHR30146">
    <property type="entry name" value="LACI-RELATED TRANSCRIPTIONAL REPRESSOR"/>
    <property type="match status" value="1"/>
</dbReference>
<dbReference type="Pfam" id="PF00356">
    <property type="entry name" value="LacI"/>
    <property type="match status" value="1"/>
</dbReference>
<dbReference type="Pfam" id="PF13377">
    <property type="entry name" value="Peripla_BP_3"/>
    <property type="match status" value="1"/>
</dbReference>
<dbReference type="PRINTS" id="PR00036">
    <property type="entry name" value="HTHLACI"/>
</dbReference>
<dbReference type="SMART" id="SM00354">
    <property type="entry name" value="HTH_LACI"/>
    <property type="match status" value="1"/>
</dbReference>
<dbReference type="SUPFAM" id="SSF47413">
    <property type="entry name" value="lambda repressor-like DNA-binding domains"/>
    <property type="match status" value="1"/>
</dbReference>
<dbReference type="SUPFAM" id="SSF53822">
    <property type="entry name" value="Periplasmic binding protein-like I"/>
    <property type="match status" value="1"/>
</dbReference>
<dbReference type="PROSITE" id="PS00356">
    <property type="entry name" value="HTH_LACI_1"/>
    <property type="match status" value="1"/>
</dbReference>
<dbReference type="PROSITE" id="PS50932">
    <property type="entry name" value="HTH_LACI_2"/>
    <property type="match status" value="1"/>
</dbReference>
<organism>
    <name type="scientific">Escherichia coli (strain 55989 / EAEC)</name>
    <dbReference type="NCBI Taxonomy" id="585055"/>
    <lineage>
        <taxon>Bacteria</taxon>
        <taxon>Pseudomonadati</taxon>
        <taxon>Pseudomonadota</taxon>
        <taxon>Gammaproteobacteria</taxon>
        <taxon>Enterobacterales</taxon>
        <taxon>Enterobacteriaceae</taxon>
        <taxon>Escherichia</taxon>
    </lineage>
</organism>
<keyword id="KW-0238">DNA-binding</keyword>
<keyword id="KW-0658">Purine biosynthesis</keyword>
<keyword id="KW-1185">Reference proteome</keyword>
<keyword id="KW-0678">Repressor</keyword>
<keyword id="KW-0804">Transcription</keyword>
<keyword id="KW-0805">Transcription regulation</keyword>
<proteinExistence type="inferred from homology"/>
<reference key="1">
    <citation type="journal article" date="2009" name="PLoS Genet.">
        <title>Organised genome dynamics in the Escherichia coli species results in highly diverse adaptive paths.</title>
        <authorList>
            <person name="Touchon M."/>
            <person name="Hoede C."/>
            <person name="Tenaillon O."/>
            <person name="Barbe V."/>
            <person name="Baeriswyl S."/>
            <person name="Bidet P."/>
            <person name="Bingen E."/>
            <person name="Bonacorsi S."/>
            <person name="Bouchier C."/>
            <person name="Bouvet O."/>
            <person name="Calteau A."/>
            <person name="Chiapello H."/>
            <person name="Clermont O."/>
            <person name="Cruveiller S."/>
            <person name="Danchin A."/>
            <person name="Diard M."/>
            <person name="Dossat C."/>
            <person name="Karoui M.E."/>
            <person name="Frapy E."/>
            <person name="Garry L."/>
            <person name="Ghigo J.M."/>
            <person name="Gilles A.M."/>
            <person name="Johnson J."/>
            <person name="Le Bouguenec C."/>
            <person name="Lescat M."/>
            <person name="Mangenot S."/>
            <person name="Martinez-Jehanne V."/>
            <person name="Matic I."/>
            <person name="Nassif X."/>
            <person name="Oztas S."/>
            <person name="Petit M.A."/>
            <person name="Pichon C."/>
            <person name="Rouy Z."/>
            <person name="Ruf C.S."/>
            <person name="Schneider D."/>
            <person name="Tourret J."/>
            <person name="Vacherie B."/>
            <person name="Vallenet D."/>
            <person name="Medigue C."/>
            <person name="Rocha E.P.C."/>
            <person name="Denamur E."/>
        </authorList>
    </citation>
    <scope>NUCLEOTIDE SEQUENCE [LARGE SCALE GENOMIC DNA]</scope>
    <source>
        <strain>55989 / EAEC</strain>
    </source>
</reference>
<feature type="chain" id="PRO_1000165214" description="HTH-type transcriptional repressor PurR">
    <location>
        <begin position="1"/>
        <end position="341"/>
    </location>
</feature>
<feature type="domain" description="HTH lacI-type" evidence="1">
    <location>
        <begin position="2"/>
        <end position="56"/>
    </location>
</feature>
<feature type="DNA-binding region" description="H-T-H motif" evidence="1">
    <location>
        <begin position="4"/>
        <end position="23"/>
    </location>
</feature>
<feature type="DNA-binding region" evidence="1">
    <location>
        <begin position="48"/>
        <end position="56"/>
    </location>
</feature>
<feature type="binding site" evidence="1">
    <location>
        <position position="73"/>
    </location>
    <ligand>
        <name>hypoxanthine</name>
        <dbReference type="ChEBI" id="CHEBI:17368"/>
    </ligand>
</feature>
<feature type="binding site" evidence="1">
    <location>
        <position position="190"/>
    </location>
    <ligand>
        <name>hypoxanthine</name>
        <dbReference type="ChEBI" id="CHEBI:17368"/>
    </ligand>
</feature>
<feature type="binding site" evidence="1">
    <location>
        <position position="192"/>
    </location>
    <ligand>
        <name>hypoxanthine</name>
        <dbReference type="ChEBI" id="CHEBI:17368"/>
    </ligand>
</feature>
<feature type="binding site" evidence="1">
    <location>
        <position position="221"/>
    </location>
    <ligand>
        <name>hypoxanthine</name>
        <dbReference type="ChEBI" id="CHEBI:17368"/>
    </ligand>
</feature>
<feature type="binding site" evidence="1">
    <location>
        <position position="275"/>
    </location>
    <ligand>
        <name>hypoxanthine</name>
        <dbReference type="ChEBI" id="CHEBI:17368"/>
    </ligand>
</feature>
<evidence type="ECO:0000255" key="1">
    <source>
        <dbReference type="HAMAP-Rule" id="MF_01277"/>
    </source>
</evidence>
<accession>B7L5L1</accession>
<sequence length="341" mass="38175">MATIKDVAKRANVSTTTVSHVINKTRFVAEETRNAVWAAIKELHYSPSAVARSLKVNHTKSIGLLATSSEAAYFAEIIEAVEKNCFQKGYTLILGNAWNNLEKQRAYLSMMAQKRVDGLLVMCSEYPEPLLAMLEEYRHIPMVVMDWGEAKADFTDAVIDNAFEGGYMAGRYLIERGHREIGVIPGPLERNTGAGRLAGFMKAMEEAMIKVPESWIVQGDFEPESGYRAMQQILSQPHRPTAVFCGGDIMAMGALCAADEMGLRVPQDVSLIGYDNVRNARYFTPALTTIHQPKDSLGETAFNMLLDRIVNKREEPQSIEVHPRLIERRSVADGPFRDYRR</sequence>